<reference key="1">
    <citation type="journal article" date="2002" name="J. Bacteriol.">
        <title>Mosaic structure and molecular evolution of the leukotoxin operon (lktCABD) in Mannheimia (Pasteurella) haemolytica, Mannheimia glucosida, and Pasteurella trehalosi.</title>
        <authorList>
            <person name="Davies R.L."/>
            <person name="Campbell S."/>
            <person name="Whittam T.S."/>
        </authorList>
    </citation>
    <scope>NUCLEOTIDE SEQUENCE [GENOMIC DNA]</scope>
    <source>
        <strain>Serotype T10 / PH252</strain>
        <strain>Serotype T15 / PH254</strain>
        <strain>Serotype T3 / PH68</strain>
        <strain>Serotype T4 / PH246</strain>
    </source>
</reference>
<keyword id="KW-0067">ATP-binding</keyword>
<keyword id="KW-0997">Cell inner membrane</keyword>
<keyword id="KW-1003">Cell membrane</keyword>
<keyword id="KW-0472">Membrane</keyword>
<keyword id="KW-0547">Nucleotide-binding</keyword>
<keyword id="KW-1278">Translocase</keyword>
<keyword id="KW-0812">Transmembrane</keyword>
<keyword id="KW-1133">Transmembrane helix</keyword>
<keyword id="KW-0813">Transport</keyword>
<dbReference type="EC" id="7.4.2.5"/>
<dbReference type="EMBL" id="AF314523">
    <property type="protein sequence ID" value="AAL12814.1"/>
    <property type="molecule type" value="Genomic_DNA"/>
</dbReference>
<dbReference type="EMBL" id="AF314524">
    <property type="protein sequence ID" value="AAL12817.1"/>
    <property type="molecule type" value="Genomic_DNA"/>
</dbReference>
<dbReference type="EMBL" id="AF314525">
    <property type="protein sequence ID" value="AAL12820.1"/>
    <property type="molecule type" value="Genomic_DNA"/>
</dbReference>
<dbReference type="EMBL" id="AF314526">
    <property type="protein sequence ID" value="AAL12823.1"/>
    <property type="molecule type" value="Genomic_DNA"/>
</dbReference>
<dbReference type="RefSeq" id="WP_025289667.1">
    <property type="nucleotide sequence ID" value="NZ_SMAM01000003.1"/>
</dbReference>
<dbReference type="SMR" id="Q933E0"/>
<dbReference type="STRING" id="1263831.F543_6980"/>
<dbReference type="GO" id="GO:0005886">
    <property type="term" value="C:plasma membrane"/>
    <property type="evidence" value="ECO:0007669"/>
    <property type="project" value="UniProtKB-SubCell"/>
</dbReference>
<dbReference type="GO" id="GO:0030256">
    <property type="term" value="C:type I protein secretion system complex"/>
    <property type="evidence" value="ECO:0007669"/>
    <property type="project" value="InterPro"/>
</dbReference>
<dbReference type="GO" id="GO:0140359">
    <property type="term" value="F:ABC-type transporter activity"/>
    <property type="evidence" value="ECO:0007669"/>
    <property type="project" value="InterPro"/>
</dbReference>
<dbReference type="GO" id="GO:0005524">
    <property type="term" value="F:ATP binding"/>
    <property type="evidence" value="ECO:0007669"/>
    <property type="project" value="UniProtKB-KW"/>
</dbReference>
<dbReference type="GO" id="GO:0016887">
    <property type="term" value="F:ATP hydrolysis activity"/>
    <property type="evidence" value="ECO:0007669"/>
    <property type="project" value="InterPro"/>
</dbReference>
<dbReference type="GO" id="GO:0034040">
    <property type="term" value="F:ATPase-coupled lipid transmembrane transporter activity"/>
    <property type="evidence" value="ECO:0007669"/>
    <property type="project" value="TreeGrafter"/>
</dbReference>
<dbReference type="GO" id="GO:0030253">
    <property type="term" value="P:protein secretion by the type I secretion system"/>
    <property type="evidence" value="ECO:0007669"/>
    <property type="project" value="InterPro"/>
</dbReference>
<dbReference type="GO" id="GO:0006508">
    <property type="term" value="P:proteolysis"/>
    <property type="evidence" value="ECO:0007669"/>
    <property type="project" value="InterPro"/>
</dbReference>
<dbReference type="CDD" id="cd18588">
    <property type="entry name" value="ABC_6TM_CyaB_HlyB_like"/>
    <property type="match status" value="1"/>
</dbReference>
<dbReference type="CDD" id="cd03252">
    <property type="entry name" value="ABCC_Hemolysin"/>
    <property type="match status" value="1"/>
</dbReference>
<dbReference type="CDD" id="cd02417">
    <property type="entry name" value="Peptidase_C39_likeA"/>
    <property type="match status" value="1"/>
</dbReference>
<dbReference type="FunFam" id="3.40.50.300:FF:000299">
    <property type="entry name" value="ABC transporter ATP-binding protein/permease"/>
    <property type="match status" value="1"/>
</dbReference>
<dbReference type="FunFam" id="1.20.1560.10:FF:000056">
    <property type="entry name" value="Alpha-hemolysin translocation ATP-binding protein HlyB"/>
    <property type="match status" value="1"/>
</dbReference>
<dbReference type="Gene3D" id="1.20.1560.10">
    <property type="entry name" value="ABC transporter type 1, transmembrane domain"/>
    <property type="match status" value="1"/>
</dbReference>
<dbReference type="Gene3D" id="3.90.70.10">
    <property type="entry name" value="Cysteine proteinases"/>
    <property type="match status" value="1"/>
</dbReference>
<dbReference type="Gene3D" id="3.40.50.300">
    <property type="entry name" value="P-loop containing nucleotide triphosphate hydrolases"/>
    <property type="match status" value="1"/>
</dbReference>
<dbReference type="InterPro" id="IPR003593">
    <property type="entry name" value="AAA+_ATPase"/>
</dbReference>
<dbReference type="InterPro" id="IPR011527">
    <property type="entry name" value="ABC1_TM_dom"/>
</dbReference>
<dbReference type="InterPro" id="IPR036640">
    <property type="entry name" value="ABC1_TM_sf"/>
</dbReference>
<dbReference type="InterPro" id="IPR003439">
    <property type="entry name" value="ABC_transporter-like_ATP-bd"/>
</dbReference>
<dbReference type="InterPro" id="IPR017871">
    <property type="entry name" value="ABC_transporter-like_CS"/>
</dbReference>
<dbReference type="InterPro" id="IPR010132">
    <property type="entry name" value="ATPase_T1SS_HlyB"/>
</dbReference>
<dbReference type="InterPro" id="IPR027417">
    <property type="entry name" value="P-loop_NTPase"/>
</dbReference>
<dbReference type="InterPro" id="IPR005074">
    <property type="entry name" value="Peptidase_C39"/>
</dbReference>
<dbReference type="InterPro" id="IPR039395">
    <property type="entry name" value="Peptidase_C39-like_A"/>
</dbReference>
<dbReference type="InterPro" id="IPR039421">
    <property type="entry name" value="Type_1_exporter"/>
</dbReference>
<dbReference type="NCBIfam" id="TIGR01846">
    <property type="entry name" value="type_I_sec_HlyB"/>
    <property type="match status" value="1"/>
</dbReference>
<dbReference type="PANTHER" id="PTHR24221">
    <property type="entry name" value="ATP-BINDING CASSETTE SUB-FAMILY B"/>
    <property type="match status" value="1"/>
</dbReference>
<dbReference type="PANTHER" id="PTHR24221:SF647">
    <property type="entry name" value="BLL6336 PROTEIN"/>
    <property type="match status" value="1"/>
</dbReference>
<dbReference type="Pfam" id="PF00664">
    <property type="entry name" value="ABC_membrane"/>
    <property type="match status" value="1"/>
</dbReference>
<dbReference type="Pfam" id="PF00005">
    <property type="entry name" value="ABC_tran"/>
    <property type="match status" value="1"/>
</dbReference>
<dbReference type="Pfam" id="PF03412">
    <property type="entry name" value="Peptidase_C39"/>
    <property type="match status" value="1"/>
</dbReference>
<dbReference type="SMART" id="SM00382">
    <property type="entry name" value="AAA"/>
    <property type="match status" value="1"/>
</dbReference>
<dbReference type="SUPFAM" id="SSF90123">
    <property type="entry name" value="ABC transporter transmembrane region"/>
    <property type="match status" value="1"/>
</dbReference>
<dbReference type="SUPFAM" id="SSF52540">
    <property type="entry name" value="P-loop containing nucleoside triphosphate hydrolases"/>
    <property type="match status" value="1"/>
</dbReference>
<dbReference type="PROSITE" id="PS50929">
    <property type="entry name" value="ABC_TM1F"/>
    <property type="match status" value="1"/>
</dbReference>
<dbReference type="PROSITE" id="PS00211">
    <property type="entry name" value="ABC_TRANSPORTER_1"/>
    <property type="match status" value="1"/>
</dbReference>
<dbReference type="PROSITE" id="PS50893">
    <property type="entry name" value="ABC_TRANSPORTER_2"/>
    <property type="match status" value="1"/>
</dbReference>
<dbReference type="PROSITE" id="PS50990">
    <property type="entry name" value="PEPTIDASE_C39"/>
    <property type="match status" value="1"/>
</dbReference>
<gene>
    <name type="primary">lktB</name>
</gene>
<organism>
    <name type="scientific">Bibersteinia trehalosi</name>
    <name type="common">Pasteurella trehalosi</name>
    <dbReference type="NCBI Taxonomy" id="47735"/>
    <lineage>
        <taxon>Bacteria</taxon>
        <taxon>Pseudomonadati</taxon>
        <taxon>Pseudomonadota</taxon>
        <taxon>Gammaproteobacteria</taxon>
        <taxon>Pasteurellales</taxon>
        <taxon>Pasteurellaceae</taxon>
        <taxon>Bibersteinia</taxon>
    </lineage>
</organism>
<evidence type="ECO:0000250" key="1"/>
<evidence type="ECO:0000255" key="2">
    <source>
        <dbReference type="PROSITE-ProRule" id="PRU00362"/>
    </source>
</evidence>
<evidence type="ECO:0000255" key="3">
    <source>
        <dbReference type="PROSITE-ProRule" id="PRU00434"/>
    </source>
</evidence>
<evidence type="ECO:0000255" key="4">
    <source>
        <dbReference type="PROSITE-ProRule" id="PRU00441"/>
    </source>
</evidence>
<evidence type="ECO:0000305" key="5"/>
<protein>
    <recommendedName>
        <fullName>Leukotoxin translocation ATP-binding protein LktB</fullName>
        <ecNumber>7.4.2.5</ecNumber>
    </recommendedName>
</protein>
<sequence length="708" mass="79743">MEANHQRNDLGLVALTMLAQYHNISLNPEEIKHKFDLDGKGLSLTSWLLAAKSLALKAKHIKKEISRLHLVNLPALVWQDNGKHFLLVKVDTDNNRYLTYNLEQDAPQILSQDEFEACYQGQLILVTSRASVVGQLAKFDFTWFIPAVIKYRKIFLETLIVSIFLQIFALITPLFFQVVMDKVLVHRGFSTLNIITVALAIVIIFEIVLSGLRTYVFSHSTSRIDVELGAKLFRHLLSLPISYFENRRVGDTVARVRELDQIRNFLTGQALTSVLDLLFSFIFFAVMWYYSPKLTLVILGSLPFYILWSIFISPILRRRLDDKFARSADNQAFLVESVTAINMIKAMAVAPQMTDTWDKQLASYVSSSFRVTVLATIGQQGVQLIQKTVMVINLWLGAHLVISGDLSIGQLIAFNMLSGQVIAPVIRLAQLWQDFQQVGISVTRLGDVLNSPTEQYQGKLSLPEIKGDISFKNIRFRYKPDAPTILNNVNLEIRQGEVIGIVGRSGSGKSTLTKLLQRFYIPENGQVLIDGHDLALADPNWLRRQIGVVLQDNVLLNRSIRENIALSDPGMPMERVIYAAKLAGAHDFISELREGYNTIVGEQGAGLSGGQRQRIAIARALVNNPKILIFDEATSALDYESEHIIMQNMQKICQGRTVILIAHRLSTVKNADRIIVMEKGEIVEQGKHHELLQNSNGLYSYLHQLQLN</sequence>
<comment type="function">
    <text evidence="5">Part of the ABC transporter complex LktBD involved in leukotoxin export. Transmembrane domains (TMD) form a pore in the inner membrane and the ATP-binding domain (NBD) is responsible for energy generation (Probable).</text>
</comment>
<comment type="catalytic activity">
    <reaction>
        <text>ATP + H2O + proteinSide 1 = ADP + phosphate + proteinSide 2.</text>
        <dbReference type="EC" id="7.4.2.5"/>
    </reaction>
</comment>
<comment type="subunit">
    <text evidence="1">Homodimer.</text>
</comment>
<comment type="subcellular location">
    <subcellularLocation>
        <location evidence="5">Cell inner membrane</location>
        <topology evidence="5">Multi-pass membrane protein</topology>
    </subcellularLocation>
</comment>
<comment type="domain">
    <text>In LktB the peptidase C39 domain, the ATP-binding domain (NBD) and the transmembrane domain (TMD) are fused.</text>
</comment>
<comment type="similarity">
    <text evidence="5">Belongs to the ABC transporter superfamily. Protein-1 exporter (TC 3.A.1.109) family.</text>
</comment>
<comment type="caution">
    <text evidence="5">Leu-10 is present instead of the conserved Cys which is expected to be the active site residue of peptidase C39. Thus this protein is presumed to be without peptidase activity.</text>
</comment>
<feature type="chain" id="PRO_0000092388" description="Leukotoxin translocation ATP-binding protein LktB">
    <location>
        <begin position="1"/>
        <end position="708"/>
    </location>
</feature>
<feature type="transmembrane region" description="Helical" evidence="4">
    <location>
        <begin position="159"/>
        <end position="179"/>
    </location>
</feature>
<feature type="transmembrane region" description="Helical" evidence="4">
    <location>
        <begin position="192"/>
        <end position="212"/>
    </location>
</feature>
<feature type="transmembrane region" description="Helical" evidence="4">
    <location>
        <begin position="270"/>
        <end position="290"/>
    </location>
</feature>
<feature type="transmembrane region" description="Helical" evidence="4">
    <location>
        <begin position="296"/>
        <end position="316"/>
    </location>
</feature>
<feature type="transmembrane region" description="Helical" evidence="4">
    <location>
        <begin position="389"/>
        <end position="409"/>
    </location>
</feature>
<feature type="domain" description="Peptidase C39" evidence="2">
    <location>
        <begin position="1"/>
        <end position="126"/>
    </location>
</feature>
<feature type="domain" description="ABC transmembrane type-1" evidence="4">
    <location>
        <begin position="155"/>
        <end position="437"/>
    </location>
</feature>
<feature type="domain" description="ABC transporter" evidence="2 3">
    <location>
        <begin position="469"/>
        <end position="704"/>
    </location>
</feature>
<feature type="binding site" evidence="2 3">
    <location>
        <begin position="503"/>
        <end position="510"/>
    </location>
    <ligand>
        <name>ATP</name>
        <dbReference type="ChEBI" id="CHEBI:30616"/>
    </ligand>
</feature>
<feature type="sequence variant" description="In strain: Serotype T10 / PH252.">
    <original>P</original>
    <variation>S</variation>
    <location>
        <position position="351"/>
    </location>
</feature>
<proteinExistence type="inferred from homology"/>
<accession>Q933E0</accession>
<accession>Q93FG0</accession>
<name>LKTB_BIBTR</name>